<name>LPXA_SINMW</name>
<sequence length="270" mass="28197">MIASSAKIHPSSAIEGGAVIGENVKIGPFCHIGPNVVLADEVEILSHVTVIGRTTVGKGTKIFPGAVIGGDSQSMHHSALNTTLVIGENCTIREGVTMNTGTVEHGGATIVGDNNLFLAYSHVAHDCRLGNNIILSNNVMLAGHVTVADRAILGGGSAVHQFTRIGRQAFIGGLSAVSYDVIPYGMLNGNPGLLSGLNVVGMTRAGFDRSTIHRVRRCYKQIFEGDGSIRANAAAIRDEYLDCAPALEILDFIAAESDRALSSPNRGAKG</sequence>
<reference key="1">
    <citation type="submission" date="2007-06" db="EMBL/GenBank/DDBJ databases">
        <title>Complete sequence of Sinorhizobium medicae WSM419 chromosome.</title>
        <authorList>
            <consortium name="US DOE Joint Genome Institute"/>
            <person name="Copeland A."/>
            <person name="Lucas S."/>
            <person name="Lapidus A."/>
            <person name="Barry K."/>
            <person name="Glavina del Rio T."/>
            <person name="Dalin E."/>
            <person name="Tice H."/>
            <person name="Pitluck S."/>
            <person name="Chain P."/>
            <person name="Malfatti S."/>
            <person name="Shin M."/>
            <person name="Vergez L."/>
            <person name="Schmutz J."/>
            <person name="Larimer F."/>
            <person name="Land M."/>
            <person name="Hauser L."/>
            <person name="Kyrpides N."/>
            <person name="Mikhailova N."/>
            <person name="Reeve W.G."/>
            <person name="Richardson P."/>
        </authorList>
    </citation>
    <scope>NUCLEOTIDE SEQUENCE [LARGE SCALE GENOMIC DNA]</scope>
    <source>
        <strain>WSM419</strain>
    </source>
</reference>
<comment type="function">
    <text evidence="1">Involved in the biosynthesis of lipid A, a phosphorylated glycolipid that anchors the lipopolysaccharide to the outer membrane of the cell.</text>
</comment>
<comment type="catalytic activity">
    <reaction evidence="1">
        <text>a (3R)-hydroxyacyl-[ACP] + UDP-N-acetyl-alpha-D-glucosamine = a UDP-3-O-[(3R)-3-hydroxyacyl]-N-acetyl-alpha-D-glucosamine + holo-[ACP]</text>
        <dbReference type="Rhea" id="RHEA:67812"/>
        <dbReference type="Rhea" id="RHEA-COMP:9685"/>
        <dbReference type="Rhea" id="RHEA-COMP:9945"/>
        <dbReference type="ChEBI" id="CHEBI:57705"/>
        <dbReference type="ChEBI" id="CHEBI:64479"/>
        <dbReference type="ChEBI" id="CHEBI:78827"/>
        <dbReference type="ChEBI" id="CHEBI:173225"/>
        <dbReference type="EC" id="2.3.1.129"/>
    </reaction>
</comment>
<comment type="pathway">
    <text evidence="1">Glycolipid biosynthesis; lipid IV(A) biosynthesis; lipid IV(A) from (3R)-3-hydroxytetradecanoyl-[acyl-carrier-protein] and UDP-N-acetyl-alpha-D-glucosamine: step 1/6.</text>
</comment>
<comment type="subunit">
    <text evidence="1">Homotrimer.</text>
</comment>
<comment type="subcellular location">
    <subcellularLocation>
        <location evidence="1">Cytoplasm</location>
    </subcellularLocation>
</comment>
<comment type="similarity">
    <text evidence="1">Belongs to the transferase hexapeptide repeat family. LpxA subfamily.</text>
</comment>
<dbReference type="EC" id="2.3.1.129" evidence="1"/>
<dbReference type="EMBL" id="CP000738">
    <property type="protein sequence ID" value="ABR59992.1"/>
    <property type="molecule type" value="Genomic_DNA"/>
</dbReference>
<dbReference type="RefSeq" id="YP_001326827.1">
    <property type="nucleotide sequence ID" value="NC_009636.1"/>
</dbReference>
<dbReference type="SMR" id="A6U8L2"/>
<dbReference type="STRING" id="366394.Smed_1141"/>
<dbReference type="KEGG" id="smd:Smed_1141"/>
<dbReference type="PATRIC" id="fig|366394.8.peg.4266"/>
<dbReference type="eggNOG" id="COG1043">
    <property type="taxonomic scope" value="Bacteria"/>
</dbReference>
<dbReference type="HOGENOM" id="CLU_061249_0_0_5"/>
<dbReference type="OrthoDB" id="9807278at2"/>
<dbReference type="UniPathway" id="UPA00359">
    <property type="reaction ID" value="UER00477"/>
</dbReference>
<dbReference type="Proteomes" id="UP000001108">
    <property type="component" value="Chromosome"/>
</dbReference>
<dbReference type="GO" id="GO:0005737">
    <property type="term" value="C:cytoplasm"/>
    <property type="evidence" value="ECO:0007669"/>
    <property type="project" value="UniProtKB-SubCell"/>
</dbReference>
<dbReference type="GO" id="GO:0016020">
    <property type="term" value="C:membrane"/>
    <property type="evidence" value="ECO:0007669"/>
    <property type="project" value="GOC"/>
</dbReference>
<dbReference type="GO" id="GO:0008780">
    <property type="term" value="F:acyl-[acyl-carrier-protein]-UDP-N-acetylglucosamine O-acyltransferase activity"/>
    <property type="evidence" value="ECO:0007669"/>
    <property type="project" value="UniProtKB-UniRule"/>
</dbReference>
<dbReference type="GO" id="GO:0009245">
    <property type="term" value="P:lipid A biosynthetic process"/>
    <property type="evidence" value="ECO:0007669"/>
    <property type="project" value="UniProtKB-UniRule"/>
</dbReference>
<dbReference type="CDD" id="cd03351">
    <property type="entry name" value="LbH_UDP-GlcNAc_AT"/>
    <property type="match status" value="1"/>
</dbReference>
<dbReference type="Gene3D" id="2.160.10.10">
    <property type="entry name" value="Hexapeptide repeat proteins"/>
    <property type="match status" value="1"/>
</dbReference>
<dbReference type="Gene3D" id="1.20.1180.10">
    <property type="entry name" value="Udp N-acetylglucosamine O-acyltransferase, C-terminal domain"/>
    <property type="match status" value="1"/>
</dbReference>
<dbReference type="HAMAP" id="MF_00387">
    <property type="entry name" value="LpxA"/>
    <property type="match status" value="1"/>
</dbReference>
<dbReference type="InterPro" id="IPR029098">
    <property type="entry name" value="Acetyltransf_C"/>
</dbReference>
<dbReference type="InterPro" id="IPR037157">
    <property type="entry name" value="Acetyltransf_C_sf"/>
</dbReference>
<dbReference type="InterPro" id="IPR001451">
    <property type="entry name" value="Hexapep"/>
</dbReference>
<dbReference type="InterPro" id="IPR018357">
    <property type="entry name" value="Hexapep_transf_CS"/>
</dbReference>
<dbReference type="InterPro" id="IPR010137">
    <property type="entry name" value="Lipid_A_LpxA"/>
</dbReference>
<dbReference type="InterPro" id="IPR011004">
    <property type="entry name" value="Trimer_LpxA-like_sf"/>
</dbReference>
<dbReference type="NCBIfam" id="TIGR01852">
    <property type="entry name" value="lipid_A_lpxA"/>
    <property type="match status" value="1"/>
</dbReference>
<dbReference type="NCBIfam" id="NF003657">
    <property type="entry name" value="PRK05289.1"/>
    <property type="match status" value="1"/>
</dbReference>
<dbReference type="PANTHER" id="PTHR43480">
    <property type="entry name" value="ACYL-[ACYL-CARRIER-PROTEIN]--UDP-N-ACETYLGLUCOSAMINE O-ACYLTRANSFERASE"/>
    <property type="match status" value="1"/>
</dbReference>
<dbReference type="PANTHER" id="PTHR43480:SF1">
    <property type="entry name" value="ACYL-[ACYL-CARRIER-PROTEIN]--UDP-N-ACETYLGLUCOSAMINE O-ACYLTRANSFERASE, MITOCHONDRIAL-RELATED"/>
    <property type="match status" value="1"/>
</dbReference>
<dbReference type="Pfam" id="PF13720">
    <property type="entry name" value="Acetyltransf_11"/>
    <property type="match status" value="1"/>
</dbReference>
<dbReference type="Pfam" id="PF00132">
    <property type="entry name" value="Hexapep"/>
    <property type="match status" value="1"/>
</dbReference>
<dbReference type="PIRSF" id="PIRSF000456">
    <property type="entry name" value="UDP-GlcNAc_acltr"/>
    <property type="match status" value="1"/>
</dbReference>
<dbReference type="SUPFAM" id="SSF51161">
    <property type="entry name" value="Trimeric LpxA-like enzymes"/>
    <property type="match status" value="1"/>
</dbReference>
<dbReference type="PROSITE" id="PS00101">
    <property type="entry name" value="HEXAPEP_TRANSFERASES"/>
    <property type="match status" value="1"/>
</dbReference>
<protein>
    <recommendedName>
        <fullName evidence="1">Acyl-[acyl-carrier-protein]--UDP-N-acetylglucosamine O-acyltransferase</fullName>
        <shortName evidence="1">UDP-N-acetylglucosamine acyltransferase</shortName>
        <ecNumber evidence="1">2.3.1.129</ecNumber>
    </recommendedName>
</protein>
<organism>
    <name type="scientific">Sinorhizobium medicae (strain WSM419)</name>
    <name type="common">Ensifer medicae</name>
    <dbReference type="NCBI Taxonomy" id="366394"/>
    <lineage>
        <taxon>Bacteria</taxon>
        <taxon>Pseudomonadati</taxon>
        <taxon>Pseudomonadota</taxon>
        <taxon>Alphaproteobacteria</taxon>
        <taxon>Hyphomicrobiales</taxon>
        <taxon>Rhizobiaceae</taxon>
        <taxon>Sinorhizobium/Ensifer group</taxon>
        <taxon>Sinorhizobium</taxon>
    </lineage>
</organism>
<accession>A6U8L2</accession>
<proteinExistence type="inferred from homology"/>
<evidence type="ECO:0000255" key="1">
    <source>
        <dbReference type="HAMAP-Rule" id="MF_00387"/>
    </source>
</evidence>
<gene>
    <name evidence="1" type="primary">lpxA</name>
    <name type="ordered locus">Smed_1141</name>
</gene>
<feature type="chain" id="PRO_1000122734" description="Acyl-[acyl-carrier-protein]--UDP-N-acetylglucosamine O-acyltransferase">
    <location>
        <begin position="1"/>
        <end position="270"/>
    </location>
</feature>
<keyword id="KW-0012">Acyltransferase</keyword>
<keyword id="KW-0963">Cytoplasm</keyword>
<keyword id="KW-0441">Lipid A biosynthesis</keyword>
<keyword id="KW-0444">Lipid biosynthesis</keyword>
<keyword id="KW-0443">Lipid metabolism</keyword>
<keyword id="KW-0677">Repeat</keyword>
<keyword id="KW-0808">Transferase</keyword>